<accession>P23750</accession>
<accession>C8VRA0</accession>
<accession>Q5BFE6</accession>
<gene>
    <name type="primary">hhfA</name>
    <name type="ORF">AN0734</name>
</gene>
<comment type="function">
    <text>Core component of nucleosome. Nucleosomes wrap and compact DNA into chromatin, limiting DNA accessibility to the cellular machineries which require DNA as a template. Histones thereby play a central role in transcription regulation, DNA repair, DNA replication and chromosomal stability. DNA accessibility is regulated via a complex set of post-translational modifications of histones, also called histone code, and nucleosome remodeling.</text>
</comment>
<comment type="subunit">
    <text>The nucleosome is a histone octamer containing two molecules each of H2A, H2B, H3 and H4 assembled in one H3-H4 heterotetramer and two H2A-H2B heterodimers. The octamer wraps approximately 147 bp of DNA.</text>
</comment>
<comment type="subcellular location">
    <subcellularLocation>
        <location evidence="1">Nucleus</location>
    </subcellularLocation>
    <subcellularLocation>
        <location evidence="1">Chromosome</location>
    </subcellularLocation>
</comment>
<comment type="PTM">
    <text evidence="2">Glutarylation at Lys-92 (H4K91glu) destabilizes nucleosomes by promoting dissociation of the H2A-H2B dimers from nucleosomes.</text>
</comment>
<comment type="similarity">
    <text evidence="5">Belongs to the histone H4 family.</text>
</comment>
<comment type="sequence caution" evidence="5">
    <conflict type="erroneous gene model prediction">
        <sequence resource="EMBL-CDS" id="EAA65376"/>
    </conflict>
</comment>
<reference key="1">
    <citation type="journal article" date="1990" name="Mol. Gen. Genet.">
        <title>Sequence, organization and expression of the core histone genes of Aspergillus nidulans.</title>
        <authorList>
            <person name="Ehinger A."/>
            <person name="Denison S.H."/>
            <person name="May G.S."/>
        </authorList>
    </citation>
    <scope>NUCLEOTIDE SEQUENCE [GENOMIC DNA]</scope>
    <source>
        <strain>R153</strain>
    </source>
</reference>
<reference key="2">
    <citation type="journal article" date="2005" name="Nature">
        <title>Sequencing of Aspergillus nidulans and comparative analysis with A. fumigatus and A. oryzae.</title>
        <authorList>
            <person name="Galagan J.E."/>
            <person name="Calvo S.E."/>
            <person name="Cuomo C."/>
            <person name="Ma L.-J."/>
            <person name="Wortman J.R."/>
            <person name="Batzoglou S."/>
            <person name="Lee S.-I."/>
            <person name="Bastuerkmen M."/>
            <person name="Spevak C.C."/>
            <person name="Clutterbuck J."/>
            <person name="Kapitonov V."/>
            <person name="Jurka J."/>
            <person name="Scazzocchio C."/>
            <person name="Farman M.L."/>
            <person name="Butler J."/>
            <person name="Purcell S."/>
            <person name="Harris S."/>
            <person name="Braus G.H."/>
            <person name="Draht O."/>
            <person name="Busch S."/>
            <person name="D'Enfert C."/>
            <person name="Bouchier C."/>
            <person name="Goldman G.H."/>
            <person name="Bell-Pedersen D."/>
            <person name="Griffiths-Jones S."/>
            <person name="Doonan J.H."/>
            <person name="Yu J."/>
            <person name="Vienken K."/>
            <person name="Pain A."/>
            <person name="Freitag M."/>
            <person name="Selker E.U."/>
            <person name="Archer D.B."/>
            <person name="Penalva M.A."/>
            <person name="Oakley B.R."/>
            <person name="Momany M."/>
            <person name="Tanaka T."/>
            <person name="Kumagai T."/>
            <person name="Asai K."/>
            <person name="Machida M."/>
            <person name="Nierman W.C."/>
            <person name="Denning D.W."/>
            <person name="Caddick M.X."/>
            <person name="Hynes M."/>
            <person name="Paoletti M."/>
            <person name="Fischer R."/>
            <person name="Miller B.L."/>
            <person name="Dyer P.S."/>
            <person name="Sachs M.S."/>
            <person name="Osmani S.A."/>
            <person name="Birren B.W."/>
        </authorList>
    </citation>
    <scope>NUCLEOTIDE SEQUENCE [LARGE SCALE GENOMIC DNA]</scope>
    <source>
        <strain>FGSC A4 / ATCC 38163 / CBS 112.46 / NRRL 194 / M139</strain>
    </source>
</reference>
<reference key="3">
    <citation type="journal article" date="2009" name="Fungal Genet. Biol.">
        <title>The 2008 update of the Aspergillus nidulans genome annotation: a community effort.</title>
        <authorList>
            <person name="Wortman J.R."/>
            <person name="Gilsenan J.M."/>
            <person name="Joardar V."/>
            <person name="Deegan J."/>
            <person name="Clutterbuck J."/>
            <person name="Andersen M.R."/>
            <person name="Archer D."/>
            <person name="Bencina M."/>
            <person name="Braus G."/>
            <person name="Coutinho P."/>
            <person name="von Dohren H."/>
            <person name="Doonan J."/>
            <person name="Driessen A.J."/>
            <person name="Durek P."/>
            <person name="Espeso E."/>
            <person name="Fekete E."/>
            <person name="Flipphi M."/>
            <person name="Estrada C.G."/>
            <person name="Geysens S."/>
            <person name="Goldman G."/>
            <person name="de Groot P.W."/>
            <person name="Hansen K."/>
            <person name="Harris S.D."/>
            <person name="Heinekamp T."/>
            <person name="Helmstaedt K."/>
            <person name="Henrissat B."/>
            <person name="Hofmann G."/>
            <person name="Homan T."/>
            <person name="Horio T."/>
            <person name="Horiuchi H."/>
            <person name="James S."/>
            <person name="Jones M."/>
            <person name="Karaffa L."/>
            <person name="Karanyi Z."/>
            <person name="Kato M."/>
            <person name="Keller N."/>
            <person name="Kelly D.E."/>
            <person name="Kiel J.A."/>
            <person name="Kim J.M."/>
            <person name="van der Klei I.J."/>
            <person name="Klis F.M."/>
            <person name="Kovalchuk A."/>
            <person name="Krasevec N."/>
            <person name="Kubicek C.P."/>
            <person name="Liu B."/>
            <person name="Maccabe A."/>
            <person name="Meyer V."/>
            <person name="Mirabito P."/>
            <person name="Miskei M."/>
            <person name="Mos M."/>
            <person name="Mullins J."/>
            <person name="Nelson D.R."/>
            <person name="Nielsen J."/>
            <person name="Oakley B.R."/>
            <person name="Osmani S.A."/>
            <person name="Pakula T."/>
            <person name="Paszewski A."/>
            <person name="Paulsen I."/>
            <person name="Pilsyk S."/>
            <person name="Pocsi I."/>
            <person name="Punt P.J."/>
            <person name="Ram A.F."/>
            <person name="Ren Q."/>
            <person name="Robellet X."/>
            <person name="Robson G."/>
            <person name="Seiboth B."/>
            <person name="van Solingen P."/>
            <person name="Specht T."/>
            <person name="Sun J."/>
            <person name="Taheri-Talesh N."/>
            <person name="Takeshita N."/>
            <person name="Ussery D."/>
            <person name="vanKuyk P.A."/>
            <person name="Visser H."/>
            <person name="van de Vondervoort P.J."/>
            <person name="de Vries R.P."/>
            <person name="Walton J."/>
            <person name="Xiang X."/>
            <person name="Xiong Y."/>
            <person name="Zeng A.P."/>
            <person name="Brandt B.W."/>
            <person name="Cornell M.J."/>
            <person name="van den Hondel C.A."/>
            <person name="Visser J."/>
            <person name="Oliver S.G."/>
            <person name="Turner G."/>
        </authorList>
    </citation>
    <scope>GENOME REANNOTATION</scope>
    <source>
        <strain>FGSC A4 / ATCC 38163 / CBS 112.46 / NRRL 194 / M139</strain>
    </source>
</reference>
<proteinExistence type="inferred from homology"/>
<dbReference type="EMBL" id="U12630">
    <property type="protein sequence ID" value="AAA20820.1"/>
    <property type="molecule type" value="Genomic_DNA"/>
</dbReference>
<dbReference type="EMBL" id="X55549">
    <property type="protein sequence ID" value="CAA39155.1"/>
    <property type="molecule type" value="Genomic_DNA"/>
</dbReference>
<dbReference type="EMBL" id="AACD01000012">
    <property type="protein sequence ID" value="EAA65376.1"/>
    <property type="status" value="ALT_SEQ"/>
    <property type="molecule type" value="Genomic_DNA"/>
</dbReference>
<dbReference type="EMBL" id="BN001308">
    <property type="protein sequence ID" value="CBF88885.1"/>
    <property type="molecule type" value="Genomic_DNA"/>
</dbReference>
<dbReference type="PIR" id="S11939">
    <property type="entry name" value="S11939"/>
</dbReference>
<dbReference type="RefSeq" id="XP_658338.1">
    <property type="nucleotide sequence ID" value="XM_653246.1"/>
</dbReference>
<dbReference type="SMR" id="P23750"/>
<dbReference type="FunCoup" id="P23750">
    <property type="interactions" value="1180"/>
</dbReference>
<dbReference type="STRING" id="227321.P23750"/>
<dbReference type="EnsemblFungi" id="CBF88885">
    <property type="protein sequence ID" value="CBF88885"/>
    <property type="gene ID" value="ANIA_00734"/>
</dbReference>
<dbReference type="VEuPathDB" id="FungiDB:AN0734"/>
<dbReference type="eggNOG" id="KOG3467">
    <property type="taxonomic scope" value="Eukaryota"/>
</dbReference>
<dbReference type="HOGENOM" id="CLU_109117_2_3_1"/>
<dbReference type="InParanoid" id="P23750"/>
<dbReference type="OMA" id="QKEHING"/>
<dbReference type="OrthoDB" id="3919494at2759"/>
<dbReference type="Proteomes" id="UP000000560">
    <property type="component" value="Chromosome VIII"/>
</dbReference>
<dbReference type="GO" id="GO:0000786">
    <property type="term" value="C:nucleosome"/>
    <property type="evidence" value="ECO:0007669"/>
    <property type="project" value="UniProtKB-KW"/>
</dbReference>
<dbReference type="GO" id="GO:0005634">
    <property type="term" value="C:nucleus"/>
    <property type="evidence" value="ECO:0007669"/>
    <property type="project" value="UniProtKB-SubCell"/>
</dbReference>
<dbReference type="GO" id="GO:0003677">
    <property type="term" value="F:DNA binding"/>
    <property type="evidence" value="ECO:0000318"/>
    <property type="project" value="GO_Central"/>
</dbReference>
<dbReference type="GO" id="GO:0046982">
    <property type="term" value="F:protein heterodimerization activity"/>
    <property type="evidence" value="ECO:0007669"/>
    <property type="project" value="InterPro"/>
</dbReference>
<dbReference type="GO" id="GO:0030527">
    <property type="term" value="F:structural constituent of chromatin"/>
    <property type="evidence" value="ECO:0007669"/>
    <property type="project" value="InterPro"/>
</dbReference>
<dbReference type="GO" id="GO:0006334">
    <property type="term" value="P:nucleosome assembly"/>
    <property type="evidence" value="ECO:0000318"/>
    <property type="project" value="GO_Central"/>
</dbReference>
<dbReference type="CDD" id="cd22912">
    <property type="entry name" value="HFD_H4"/>
    <property type="match status" value="1"/>
</dbReference>
<dbReference type="FunFam" id="1.10.20.10:FF:000007">
    <property type="entry name" value="Histone H4"/>
    <property type="match status" value="1"/>
</dbReference>
<dbReference type="Gene3D" id="1.10.20.10">
    <property type="entry name" value="Histone, subunit A"/>
    <property type="match status" value="1"/>
</dbReference>
<dbReference type="InterPro" id="IPR035425">
    <property type="entry name" value="CENP-T/H4_C"/>
</dbReference>
<dbReference type="InterPro" id="IPR009072">
    <property type="entry name" value="Histone-fold"/>
</dbReference>
<dbReference type="InterPro" id="IPR001951">
    <property type="entry name" value="Histone_H4"/>
</dbReference>
<dbReference type="InterPro" id="IPR019809">
    <property type="entry name" value="Histone_H4_CS"/>
</dbReference>
<dbReference type="InterPro" id="IPR004823">
    <property type="entry name" value="TAF_TATA-bd_Histone-like_dom"/>
</dbReference>
<dbReference type="PANTHER" id="PTHR10484">
    <property type="entry name" value="HISTONE H4"/>
    <property type="match status" value="1"/>
</dbReference>
<dbReference type="Pfam" id="PF15511">
    <property type="entry name" value="CENP-T_C"/>
    <property type="match status" value="1"/>
</dbReference>
<dbReference type="PRINTS" id="PR00623">
    <property type="entry name" value="HISTONEH4"/>
</dbReference>
<dbReference type="SMART" id="SM00417">
    <property type="entry name" value="H4"/>
    <property type="match status" value="1"/>
</dbReference>
<dbReference type="SMART" id="SM00803">
    <property type="entry name" value="TAF"/>
    <property type="match status" value="1"/>
</dbReference>
<dbReference type="SUPFAM" id="SSF47113">
    <property type="entry name" value="Histone-fold"/>
    <property type="match status" value="1"/>
</dbReference>
<dbReference type="PROSITE" id="PS00047">
    <property type="entry name" value="HISTONE_H4"/>
    <property type="match status" value="1"/>
</dbReference>
<evidence type="ECO:0000250" key="1"/>
<evidence type="ECO:0000250" key="2">
    <source>
        <dbReference type="UniProtKB" id="P02309"/>
    </source>
</evidence>
<evidence type="ECO:0000250" key="3">
    <source>
        <dbReference type="UniProtKB" id="P62805"/>
    </source>
</evidence>
<evidence type="ECO:0000256" key="4">
    <source>
        <dbReference type="SAM" id="MobiDB-lite"/>
    </source>
</evidence>
<evidence type="ECO:0000305" key="5"/>
<keyword id="KW-0007">Acetylation</keyword>
<keyword id="KW-0158">Chromosome</keyword>
<keyword id="KW-0238">DNA-binding</keyword>
<keyword id="KW-0488">Methylation</keyword>
<keyword id="KW-0544">Nucleosome core</keyword>
<keyword id="KW-0539">Nucleus</keyword>
<keyword id="KW-1185">Reference proteome</keyword>
<sequence length="103" mass="11356">MSGRGKGGKGLGKGGAKRHRKILRDNIQGITKPAIRRLARRGGVKRISAMIYEETRGVLKTFLEGVIRDAVTYTEHAKRKTVTSLDVVYALKRQGRTLYGFGG</sequence>
<name>H41_EMENI</name>
<organism>
    <name type="scientific">Emericella nidulans (strain FGSC A4 / ATCC 38163 / CBS 112.46 / NRRL 194 / M139)</name>
    <name type="common">Aspergillus nidulans</name>
    <dbReference type="NCBI Taxonomy" id="227321"/>
    <lineage>
        <taxon>Eukaryota</taxon>
        <taxon>Fungi</taxon>
        <taxon>Dikarya</taxon>
        <taxon>Ascomycota</taxon>
        <taxon>Pezizomycotina</taxon>
        <taxon>Eurotiomycetes</taxon>
        <taxon>Eurotiomycetidae</taxon>
        <taxon>Eurotiales</taxon>
        <taxon>Aspergillaceae</taxon>
        <taxon>Aspergillus</taxon>
        <taxon>Aspergillus subgen. Nidulantes</taxon>
    </lineage>
</organism>
<feature type="initiator methionine" description="Removed" evidence="1">
    <location>
        <position position="1"/>
    </location>
</feature>
<feature type="chain" id="PRO_0000158312" description="Histone H4.1">
    <location>
        <begin position="2"/>
        <end position="103"/>
    </location>
</feature>
<feature type="DNA-binding region">
    <location>
        <begin position="17"/>
        <end position="21"/>
    </location>
</feature>
<feature type="region of interest" description="Disordered" evidence="4">
    <location>
        <begin position="1"/>
        <end position="20"/>
    </location>
</feature>
<feature type="compositionally biased region" description="Gly residues" evidence="4">
    <location>
        <begin position="1"/>
        <end position="14"/>
    </location>
</feature>
<feature type="modified residue" description="N6-acetyl-N6-methyllysine; alternate" evidence="3">
    <location>
        <position position="6"/>
    </location>
</feature>
<feature type="modified residue" description="N6-methyllysine; alternate" evidence="2">
    <location>
        <position position="6"/>
    </location>
</feature>
<feature type="modified residue" description="N6-methyllysine; alternate" evidence="2">
    <location>
        <position position="9"/>
    </location>
</feature>
<feature type="modified residue" description="N6-acetyl-N6-methyllysine; alternate" evidence="3">
    <location>
        <position position="13"/>
    </location>
</feature>
<feature type="modified residue" description="N6-methyllysine; alternate" evidence="2">
    <location>
        <position position="13"/>
    </location>
</feature>
<feature type="modified residue" description="N6-glutaryllysine" evidence="2">
    <location>
        <position position="92"/>
    </location>
</feature>
<protein>
    <recommendedName>
        <fullName>Histone H4.1</fullName>
    </recommendedName>
</protein>